<accession>Q74JZ0</accession>
<gene>
    <name evidence="1" type="primary">mraZ</name>
    <name type="ordered locus">LJ_0966</name>
</gene>
<proteinExistence type="inferred from homology"/>
<protein>
    <recommendedName>
        <fullName>Transcriptional regulator MraZ</fullName>
    </recommendedName>
</protein>
<evidence type="ECO:0000255" key="1">
    <source>
        <dbReference type="HAMAP-Rule" id="MF_01008"/>
    </source>
</evidence>
<evidence type="ECO:0000255" key="2">
    <source>
        <dbReference type="PROSITE-ProRule" id="PRU01076"/>
    </source>
</evidence>
<feature type="chain" id="PRO_0000108489" description="Transcriptional regulator MraZ">
    <location>
        <begin position="1"/>
        <end position="143"/>
    </location>
</feature>
<feature type="domain" description="SpoVT-AbrB 1" evidence="2">
    <location>
        <begin position="5"/>
        <end position="47"/>
    </location>
</feature>
<feature type="domain" description="SpoVT-AbrB 2" evidence="2">
    <location>
        <begin position="76"/>
        <end position="119"/>
    </location>
</feature>
<sequence>MFMGEYHHNLDSKGRLIIPAKFRVEIGDKMIFTRGMEGCIFGYPIEEWQKIEAKLAKLPLTKRSARKFTRLFYSGAMESEFDKQGRVNLTMTLKEHAALIKECVIVGVSNRIEIWSAERWNDFSEEANENYDDIAEDLDDIEL</sequence>
<dbReference type="EMBL" id="AE017198">
    <property type="protein sequence ID" value="AAS08787.1"/>
    <property type="molecule type" value="Genomic_DNA"/>
</dbReference>
<dbReference type="RefSeq" id="WP_011161838.1">
    <property type="nucleotide sequence ID" value="NC_005362.1"/>
</dbReference>
<dbReference type="SMR" id="Q74JZ0"/>
<dbReference type="GeneID" id="83570598"/>
<dbReference type="KEGG" id="ljo:LJ_0966"/>
<dbReference type="eggNOG" id="COG2001">
    <property type="taxonomic scope" value="Bacteria"/>
</dbReference>
<dbReference type="HOGENOM" id="CLU_107907_0_5_9"/>
<dbReference type="Proteomes" id="UP000000581">
    <property type="component" value="Chromosome"/>
</dbReference>
<dbReference type="GO" id="GO:0005737">
    <property type="term" value="C:cytoplasm"/>
    <property type="evidence" value="ECO:0007669"/>
    <property type="project" value="UniProtKB-UniRule"/>
</dbReference>
<dbReference type="GO" id="GO:0009295">
    <property type="term" value="C:nucleoid"/>
    <property type="evidence" value="ECO:0007669"/>
    <property type="project" value="UniProtKB-SubCell"/>
</dbReference>
<dbReference type="GO" id="GO:0003700">
    <property type="term" value="F:DNA-binding transcription factor activity"/>
    <property type="evidence" value="ECO:0007669"/>
    <property type="project" value="UniProtKB-UniRule"/>
</dbReference>
<dbReference type="GO" id="GO:0000976">
    <property type="term" value="F:transcription cis-regulatory region binding"/>
    <property type="evidence" value="ECO:0007669"/>
    <property type="project" value="TreeGrafter"/>
</dbReference>
<dbReference type="GO" id="GO:2000143">
    <property type="term" value="P:negative regulation of DNA-templated transcription initiation"/>
    <property type="evidence" value="ECO:0007669"/>
    <property type="project" value="TreeGrafter"/>
</dbReference>
<dbReference type="CDD" id="cd16321">
    <property type="entry name" value="MraZ_C"/>
    <property type="match status" value="1"/>
</dbReference>
<dbReference type="CDD" id="cd16320">
    <property type="entry name" value="MraZ_N"/>
    <property type="match status" value="1"/>
</dbReference>
<dbReference type="FunFam" id="3.40.1550.20:FF:000002">
    <property type="entry name" value="Transcriptional regulator MraZ"/>
    <property type="match status" value="1"/>
</dbReference>
<dbReference type="Gene3D" id="3.40.1550.20">
    <property type="entry name" value="Transcriptional regulator MraZ domain"/>
    <property type="match status" value="1"/>
</dbReference>
<dbReference type="HAMAP" id="MF_01008">
    <property type="entry name" value="MraZ"/>
    <property type="match status" value="1"/>
</dbReference>
<dbReference type="InterPro" id="IPR003444">
    <property type="entry name" value="MraZ"/>
</dbReference>
<dbReference type="InterPro" id="IPR035644">
    <property type="entry name" value="MraZ_C"/>
</dbReference>
<dbReference type="InterPro" id="IPR020603">
    <property type="entry name" value="MraZ_dom"/>
</dbReference>
<dbReference type="InterPro" id="IPR035642">
    <property type="entry name" value="MraZ_N"/>
</dbReference>
<dbReference type="InterPro" id="IPR038619">
    <property type="entry name" value="MraZ_sf"/>
</dbReference>
<dbReference type="InterPro" id="IPR007159">
    <property type="entry name" value="SpoVT-AbrB_dom"/>
</dbReference>
<dbReference type="InterPro" id="IPR037914">
    <property type="entry name" value="SpoVT-AbrB_sf"/>
</dbReference>
<dbReference type="NCBIfam" id="TIGR00242">
    <property type="entry name" value="division/cell wall cluster transcriptional repressor MraZ"/>
    <property type="match status" value="1"/>
</dbReference>
<dbReference type="PANTHER" id="PTHR34701">
    <property type="entry name" value="TRANSCRIPTIONAL REGULATOR MRAZ"/>
    <property type="match status" value="1"/>
</dbReference>
<dbReference type="PANTHER" id="PTHR34701:SF1">
    <property type="entry name" value="TRANSCRIPTIONAL REGULATOR MRAZ"/>
    <property type="match status" value="1"/>
</dbReference>
<dbReference type="Pfam" id="PF02381">
    <property type="entry name" value="MraZ"/>
    <property type="match status" value="2"/>
</dbReference>
<dbReference type="SUPFAM" id="SSF89447">
    <property type="entry name" value="AbrB/MazE/MraZ-like"/>
    <property type="match status" value="1"/>
</dbReference>
<dbReference type="PROSITE" id="PS51740">
    <property type="entry name" value="SPOVT_ABRB"/>
    <property type="match status" value="2"/>
</dbReference>
<organism>
    <name type="scientific">Lactobacillus johnsonii (strain CNCM I-12250 / La1 / NCC 533)</name>
    <dbReference type="NCBI Taxonomy" id="257314"/>
    <lineage>
        <taxon>Bacteria</taxon>
        <taxon>Bacillati</taxon>
        <taxon>Bacillota</taxon>
        <taxon>Bacilli</taxon>
        <taxon>Lactobacillales</taxon>
        <taxon>Lactobacillaceae</taxon>
        <taxon>Lactobacillus</taxon>
    </lineage>
</organism>
<name>MRAZ_LACJO</name>
<keyword id="KW-0963">Cytoplasm</keyword>
<keyword id="KW-0238">DNA-binding</keyword>
<keyword id="KW-0677">Repeat</keyword>
<keyword id="KW-0804">Transcription</keyword>
<keyword id="KW-0805">Transcription regulation</keyword>
<comment type="subunit">
    <text evidence="1">Forms oligomers.</text>
</comment>
<comment type="subcellular location">
    <subcellularLocation>
        <location evidence="1">Cytoplasm</location>
        <location evidence="1">Nucleoid</location>
    </subcellularLocation>
</comment>
<comment type="similarity">
    <text evidence="1">Belongs to the MraZ family.</text>
</comment>
<reference key="1">
    <citation type="journal article" date="2004" name="Proc. Natl. Acad. Sci. U.S.A.">
        <title>The genome sequence of the probiotic intestinal bacterium Lactobacillus johnsonii NCC 533.</title>
        <authorList>
            <person name="Pridmore R.D."/>
            <person name="Berger B."/>
            <person name="Desiere F."/>
            <person name="Vilanova D."/>
            <person name="Barretto C."/>
            <person name="Pittet A.-C."/>
            <person name="Zwahlen M.-C."/>
            <person name="Rouvet M."/>
            <person name="Altermann E."/>
            <person name="Barrangou R."/>
            <person name="Mollet B."/>
            <person name="Mercenier A."/>
            <person name="Klaenhammer T."/>
            <person name="Arigoni F."/>
            <person name="Schell M.A."/>
        </authorList>
    </citation>
    <scope>NUCLEOTIDE SEQUENCE [LARGE SCALE GENOMIC DNA]</scope>
    <source>
        <strain>CNCM I-1225 / La1 / NCC 533</strain>
    </source>
</reference>